<feature type="chain" id="PRO_0000179816" description="Putative N-acetylmannosamine-6-phosphate 2-epimerase">
    <location>
        <begin position="1"/>
        <end position="237"/>
    </location>
</feature>
<evidence type="ECO:0000255" key="1">
    <source>
        <dbReference type="HAMAP-Rule" id="MF_01235"/>
    </source>
</evidence>
<evidence type="ECO:0000305" key="2"/>
<comment type="function">
    <text evidence="1">Converts N-acetylmannosamine-6-phosphate (ManNAc-6-P) to N-acetylglucosamine-6-phosphate (GlcNAc-6-P).</text>
</comment>
<comment type="catalytic activity">
    <reaction evidence="1">
        <text>an N-acyl-D-glucosamine 6-phosphate = an N-acyl-D-mannosamine 6-phosphate</text>
        <dbReference type="Rhea" id="RHEA:23932"/>
        <dbReference type="ChEBI" id="CHEBI:57599"/>
        <dbReference type="ChEBI" id="CHEBI:57666"/>
        <dbReference type="EC" id="5.1.3.9"/>
    </reaction>
</comment>
<comment type="pathway">
    <text evidence="1">Amino-sugar metabolism; N-acetylneuraminate degradation; D-fructose 6-phosphate from N-acetylneuraminate: step 3/5.</text>
</comment>
<comment type="similarity">
    <text evidence="1">Belongs to the NanE family.</text>
</comment>
<comment type="sequence caution" evidence="2">
    <conflict type="erroneous initiation">
        <sequence resource="EMBL-CDS" id="AAM25556"/>
    </conflict>
</comment>
<name>NANE_CALS4</name>
<dbReference type="EC" id="5.1.3.9" evidence="1"/>
<dbReference type="EMBL" id="AE008691">
    <property type="protein sequence ID" value="AAM25556.1"/>
    <property type="status" value="ALT_INIT"/>
    <property type="molecule type" value="Genomic_DNA"/>
</dbReference>
<dbReference type="RefSeq" id="WP_041587223.1">
    <property type="nucleotide sequence ID" value="NC_003869.1"/>
</dbReference>
<dbReference type="SMR" id="Q8R7I7"/>
<dbReference type="STRING" id="273068.TTE2420"/>
<dbReference type="KEGG" id="tte:TTE2420"/>
<dbReference type="eggNOG" id="COG3010">
    <property type="taxonomic scope" value="Bacteria"/>
</dbReference>
<dbReference type="HOGENOM" id="CLU_086300_1_0_9"/>
<dbReference type="UniPathway" id="UPA00629">
    <property type="reaction ID" value="UER00682"/>
</dbReference>
<dbReference type="Proteomes" id="UP000000555">
    <property type="component" value="Chromosome"/>
</dbReference>
<dbReference type="GO" id="GO:0005829">
    <property type="term" value="C:cytosol"/>
    <property type="evidence" value="ECO:0007669"/>
    <property type="project" value="TreeGrafter"/>
</dbReference>
<dbReference type="GO" id="GO:0047465">
    <property type="term" value="F:N-acylglucosamine-6-phosphate 2-epimerase activity"/>
    <property type="evidence" value="ECO:0007669"/>
    <property type="project" value="UniProtKB-EC"/>
</dbReference>
<dbReference type="GO" id="GO:0005975">
    <property type="term" value="P:carbohydrate metabolic process"/>
    <property type="evidence" value="ECO:0007669"/>
    <property type="project" value="UniProtKB-UniRule"/>
</dbReference>
<dbReference type="GO" id="GO:0006053">
    <property type="term" value="P:N-acetylmannosamine catabolic process"/>
    <property type="evidence" value="ECO:0007669"/>
    <property type="project" value="TreeGrafter"/>
</dbReference>
<dbReference type="GO" id="GO:0019262">
    <property type="term" value="P:N-acetylneuraminate catabolic process"/>
    <property type="evidence" value="ECO:0007669"/>
    <property type="project" value="UniProtKB-UniRule"/>
</dbReference>
<dbReference type="CDD" id="cd04729">
    <property type="entry name" value="NanE"/>
    <property type="match status" value="1"/>
</dbReference>
<dbReference type="FunFam" id="3.20.20.70:FF:000035">
    <property type="entry name" value="Putative N-acetylmannosamine-6-phosphate 2-epimerase"/>
    <property type="match status" value="1"/>
</dbReference>
<dbReference type="Gene3D" id="3.20.20.70">
    <property type="entry name" value="Aldolase class I"/>
    <property type="match status" value="1"/>
</dbReference>
<dbReference type="HAMAP" id="MF_01235">
    <property type="entry name" value="ManNAc6P_epimer"/>
    <property type="match status" value="1"/>
</dbReference>
<dbReference type="InterPro" id="IPR013785">
    <property type="entry name" value="Aldolase_TIM"/>
</dbReference>
<dbReference type="InterPro" id="IPR007260">
    <property type="entry name" value="NanE"/>
</dbReference>
<dbReference type="InterPro" id="IPR011060">
    <property type="entry name" value="RibuloseP-bd_barrel"/>
</dbReference>
<dbReference type="NCBIfam" id="NF002231">
    <property type="entry name" value="PRK01130.1"/>
    <property type="match status" value="1"/>
</dbReference>
<dbReference type="PANTHER" id="PTHR36204">
    <property type="entry name" value="N-ACETYLMANNOSAMINE-6-PHOSPHATE 2-EPIMERASE-RELATED"/>
    <property type="match status" value="1"/>
</dbReference>
<dbReference type="PANTHER" id="PTHR36204:SF1">
    <property type="entry name" value="N-ACETYLMANNOSAMINE-6-PHOSPHATE 2-EPIMERASE-RELATED"/>
    <property type="match status" value="1"/>
</dbReference>
<dbReference type="Pfam" id="PF04131">
    <property type="entry name" value="NanE"/>
    <property type="match status" value="1"/>
</dbReference>
<dbReference type="SUPFAM" id="SSF51366">
    <property type="entry name" value="Ribulose-phoshate binding barrel"/>
    <property type="match status" value="1"/>
</dbReference>
<accession>Q8R7I7</accession>
<sequence>MQMDIIQKLENGLIVSCQALEGEPLHSPFIMAKMAKAAEIGGAVAIRANGYEDIVAIKKEVSIPVIGLIKKRYEGYAPYITPTMEEVDKVIEAGADIVAIDATKAYKPGGLTTGEFLKRIKEKYPKILVMADISTYEEGIEAEKLGFDLISTTLSGYTEYSPELEGPDYELIERLARKVNVPIIAEGRIWTPEEAVKALEKGAYAVVVGTAITRPHEITRRFVTFIKERRYSNVRAK</sequence>
<proteinExistence type="inferred from homology"/>
<organism>
    <name type="scientific">Caldanaerobacter subterraneus subsp. tengcongensis (strain DSM 15242 / JCM 11007 / NBRC 100824 / MB4)</name>
    <name type="common">Thermoanaerobacter tengcongensis</name>
    <dbReference type="NCBI Taxonomy" id="273068"/>
    <lineage>
        <taxon>Bacteria</taxon>
        <taxon>Bacillati</taxon>
        <taxon>Bacillota</taxon>
        <taxon>Clostridia</taxon>
        <taxon>Thermoanaerobacterales</taxon>
        <taxon>Thermoanaerobacteraceae</taxon>
        <taxon>Caldanaerobacter</taxon>
    </lineage>
</organism>
<reference key="1">
    <citation type="journal article" date="2002" name="Genome Res.">
        <title>A complete sequence of the T. tengcongensis genome.</title>
        <authorList>
            <person name="Bao Q."/>
            <person name="Tian Y."/>
            <person name="Li W."/>
            <person name="Xu Z."/>
            <person name="Xuan Z."/>
            <person name="Hu S."/>
            <person name="Dong W."/>
            <person name="Yang J."/>
            <person name="Chen Y."/>
            <person name="Xue Y."/>
            <person name="Xu Y."/>
            <person name="Lai X."/>
            <person name="Huang L."/>
            <person name="Dong X."/>
            <person name="Ma Y."/>
            <person name="Ling L."/>
            <person name="Tan H."/>
            <person name="Chen R."/>
            <person name="Wang J."/>
            <person name="Yu J."/>
            <person name="Yang H."/>
        </authorList>
    </citation>
    <scope>NUCLEOTIDE SEQUENCE [LARGE SCALE GENOMIC DNA]</scope>
    <source>
        <strain>DSM 15242 / JCM 11007 / NBRC 100824 / MB4</strain>
    </source>
</reference>
<protein>
    <recommendedName>
        <fullName evidence="1">Putative N-acetylmannosamine-6-phosphate 2-epimerase</fullName>
        <ecNumber evidence="1">5.1.3.9</ecNumber>
    </recommendedName>
    <alternativeName>
        <fullName evidence="1">ManNAc-6-P epimerase</fullName>
    </alternativeName>
</protein>
<keyword id="KW-0119">Carbohydrate metabolism</keyword>
<keyword id="KW-0413">Isomerase</keyword>
<keyword id="KW-1185">Reference proteome</keyword>
<gene>
    <name evidence="1" type="primary">nanE</name>
    <name type="ordered locus">TTE2420</name>
</gene>